<name>PFKA_PERMH</name>
<feature type="chain" id="PRO_1000192377" description="ATP-dependent 6-phosphofructokinase">
    <location>
        <begin position="1"/>
        <end position="324"/>
    </location>
</feature>
<feature type="active site" description="Proton acceptor" evidence="1">
    <location>
        <position position="128"/>
    </location>
</feature>
<feature type="binding site" evidence="1">
    <location>
        <position position="11"/>
    </location>
    <ligand>
        <name>ATP</name>
        <dbReference type="ChEBI" id="CHEBI:30616"/>
    </ligand>
</feature>
<feature type="binding site" evidence="1">
    <location>
        <begin position="21"/>
        <end position="25"/>
    </location>
    <ligand>
        <name>ADP</name>
        <dbReference type="ChEBI" id="CHEBI:456216"/>
        <note>allosteric activator; ligand shared between dimeric partners</note>
    </ligand>
</feature>
<feature type="binding site" evidence="1">
    <location>
        <begin position="72"/>
        <end position="73"/>
    </location>
    <ligand>
        <name>ATP</name>
        <dbReference type="ChEBI" id="CHEBI:30616"/>
    </ligand>
</feature>
<feature type="binding site" evidence="1">
    <location>
        <begin position="102"/>
        <end position="105"/>
    </location>
    <ligand>
        <name>ATP</name>
        <dbReference type="ChEBI" id="CHEBI:30616"/>
    </ligand>
</feature>
<feature type="binding site" evidence="1">
    <location>
        <position position="103"/>
    </location>
    <ligand>
        <name>Mg(2+)</name>
        <dbReference type="ChEBI" id="CHEBI:18420"/>
        <note>catalytic</note>
    </ligand>
</feature>
<feature type="binding site" description="in other chain" evidence="1">
    <location>
        <begin position="126"/>
        <end position="128"/>
    </location>
    <ligand>
        <name>substrate</name>
        <note>ligand shared between dimeric partners</note>
    </ligand>
</feature>
<feature type="binding site" description="in other chain" evidence="1">
    <location>
        <position position="155"/>
    </location>
    <ligand>
        <name>ADP</name>
        <dbReference type="ChEBI" id="CHEBI:456216"/>
        <note>allosteric activator; ligand shared between dimeric partners</note>
    </ligand>
</feature>
<feature type="binding site" evidence="1">
    <location>
        <position position="163"/>
    </location>
    <ligand>
        <name>substrate</name>
        <note>ligand shared between dimeric partners</note>
    </ligand>
</feature>
<feature type="binding site" description="in other chain" evidence="1">
    <location>
        <begin position="170"/>
        <end position="172"/>
    </location>
    <ligand>
        <name>substrate</name>
        <note>ligand shared between dimeric partners</note>
    </ligand>
</feature>
<feature type="binding site" description="in other chain" evidence="1">
    <location>
        <begin position="186"/>
        <end position="188"/>
    </location>
    <ligand>
        <name>ADP</name>
        <dbReference type="ChEBI" id="CHEBI:456216"/>
        <note>allosteric activator; ligand shared between dimeric partners</note>
    </ligand>
</feature>
<feature type="binding site" description="in other chain" evidence="1">
    <location>
        <position position="212"/>
    </location>
    <ligand>
        <name>ADP</name>
        <dbReference type="ChEBI" id="CHEBI:456216"/>
        <note>allosteric activator; ligand shared between dimeric partners</note>
    </ligand>
</feature>
<feature type="binding site" description="in other chain" evidence="1">
    <location>
        <begin position="214"/>
        <end position="216"/>
    </location>
    <ligand>
        <name>ADP</name>
        <dbReference type="ChEBI" id="CHEBI:456216"/>
        <note>allosteric activator; ligand shared between dimeric partners</note>
    </ligand>
</feature>
<feature type="binding site" description="in other chain" evidence="1">
    <location>
        <position position="223"/>
    </location>
    <ligand>
        <name>substrate</name>
        <note>ligand shared between dimeric partners</note>
    </ligand>
</feature>
<feature type="binding site" evidence="1">
    <location>
        <position position="248"/>
    </location>
    <ligand>
        <name>substrate</name>
        <note>ligand shared between dimeric partners</note>
    </ligand>
</feature>
<feature type="binding site" description="in other chain" evidence="1">
    <location>
        <begin position="254"/>
        <end position="257"/>
    </location>
    <ligand>
        <name>substrate</name>
        <note>ligand shared between dimeric partners</note>
    </ligand>
</feature>
<organism>
    <name type="scientific">Persephonella marina (strain DSM 14350 / EX-H1)</name>
    <dbReference type="NCBI Taxonomy" id="123214"/>
    <lineage>
        <taxon>Bacteria</taxon>
        <taxon>Pseudomonadati</taxon>
        <taxon>Aquificota</taxon>
        <taxon>Aquificia</taxon>
        <taxon>Aquificales</taxon>
        <taxon>Hydrogenothermaceae</taxon>
        <taxon>Persephonella</taxon>
    </lineage>
</organism>
<keyword id="KW-0021">Allosteric enzyme</keyword>
<keyword id="KW-0067">ATP-binding</keyword>
<keyword id="KW-0963">Cytoplasm</keyword>
<keyword id="KW-0324">Glycolysis</keyword>
<keyword id="KW-0418">Kinase</keyword>
<keyword id="KW-0460">Magnesium</keyword>
<keyword id="KW-0479">Metal-binding</keyword>
<keyword id="KW-0547">Nucleotide-binding</keyword>
<keyword id="KW-1185">Reference proteome</keyword>
<keyword id="KW-0808">Transferase</keyword>
<comment type="function">
    <text evidence="1">Catalyzes the phosphorylation of D-fructose 6-phosphate to fructose 1,6-bisphosphate by ATP, the first committing step of glycolysis.</text>
</comment>
<comment type="catalytic activity">
    <reaction evidence="1">
        <text>beta-D-fructose 6-phosphate + ATP = beta-D-fructose 1,6-bisphosphate + ADP + H(+)</text>
        <dbReference type="Rhea" id="RHEA:16109"/>
        <dbReference type="ChEBI" id="CHEBI:15378"/>
        <dbReference type="ChEBI" id="CHEBI:30616"/>
        <dbReference type="ChEBI" id="CHEBI:32966"/>
        <dbReference type="ChEBI" id="CHEBI:57634"/>
        <dbReference type="ChEBI" id="CHEBI:456216"/>
        <dbReference type="EC" id="2.7.1.11"/>
    </reaction>
</comment>
<comment type="cofactor">
    <cofactor evidence="1">
        <name>Mg(2+)</name>
        <dbReference type="ChEBI" id="CHEBI:18420"/>
    </cofactor>
</comment>
<comment type="activity regulation">
    <text evidence="1">Allosterically activated by ADP and other diphosphonucleosides, and allosterically inhibited by phosphoenolpyruvate.</text>
</comment>
<comment type="pathway">
    <text evidence="1">Carbohydrate degradation; glycolysis; D-glyceraldehyde 3-phosphate and glycerone phosphate from D-glucose: step 3/4.</text>
</comment>
<comment type="subunit">
    <text evidence="1">Homotetramer.</text>
</comment>
<comment type="subcellular location">
    <subcellularLocation>
        <location evidence="1">Cytoplasm</location>
    </subcellularLocation>
</comment>
<comment type="similarity">
    <text evidence="1">Belongs to the phosphofructokinase type A (PFKA) family. ATP-dependent PFK group I subfamily. Prokaryotic clade 'B1' sub-subfamily.</text>
</comment>
<gene>
    <name evidence="1" type="primary">pfkA</name>
    <name type="ordered locus">PERMA_1298</name>
</gene>
<evidence type="ECO:0000255" key="1">
    <source>
        <dbReference type="HAMAP-Rule" id="MF_00339"/>
    </source>
</evidence>
<sequence>MKKIAVLTSGGDAPGLNACIRAVVRAGHYYNCEVIGVRRGFKGLIEKQFISLTPRDVGGIIDKGGTFLLSAREDRFLEYKYRKIAANNIREEKIDGLFVIGGNGSFQGAYLLSKEFGIPIIGIPKTIDNDTYGTEYTIGFDTAVNNAVDAIDKIRDTSESHERVFVIEVMGRKSGFLALAAGISTGADVTLIPEYPFPMHVIVKSIVDALNRGKKFAIVVVAEGVASAKEIADILNEKLKPFDFGGVRYSVLGYIQRGGSPTSYDRIMASRFGVFAVEEFMRGNRDFMVALENGKILSKPLEVSFGRIKKPDLKDFELNNILTI</sequence>
<proteinExistence type="inferred from homology"/>
<protein>
    <recommendedName>
        <fullName evidence="1">ATP-dependent 6-phosphofructokinase</fullName>
        <shortName evidence="1">ATP-PFK</shortName>
        <shortName evidence="1">Phosphofructokinase</shortName>
        <ecNumber evidence="1">2.7.1.11</ecNumber>
    </recommendedName>
    <alternativeName>
        <fullName evidence="1">Phosphohexokinase</fullName>
    </alternativeName>
</protein>
<dbReference type="EC" id="2.7.1.11" evidence="1"/>
<dbReference type="EMBL" id="CP001230">
    <property type="protein sequence ID" value="ACO03571.1"/>
    <property type="molecule type" value="Genomic_DNA"/>
</dbReference>
<dbReference type="RefSeq" id="WP_012675810.1">
    <property type="nucleotide sequence ID" value="NC_012440.1"/>
</dbReference>
<dbReference type="SMR" id="C0QQX4"/>
<dbReference type="STRING" id="123214.PERMA_1298"/>
<dbReference type="PaxDb" id="123214-PERMA_1298"/>
<dbReference type="KEGG" id="pmx:PERMA_1298"/>
<dbReference type="eggNOG" id="COG0205">
    <property type="taxonomic scope" value="Bacteria"/>
</dbReference>
<dbReference type="HOGENOM" id="CLU_020655_0_1_0"/>
<dbReference type="OrthoDB" id="9802503at2"/>
<dbReference type="UniPathway" id="UPA00109">
    <property type="reaction ID" value="UER00182"/>
</dbReference>
<dbReference type="Proteomes" id="UP000001366">
    <property type="component" value="Chromosome"/>
</dbReference>
<dbReference type="GO" id="GO:0005945">
    <property type="term" value="C:6-phosphofructokinase complex"/>
    <property type="evidence" value="ECO:0007669"/>
    <property type="project" value="TreeGrafter"/>
</dbReference>
<dbReference type="GO" id="GO:0003872">
    <property type="term" value="F:6-phosphofructokinase activity"/>
    <property type="evidence" value="ECO:0007669"/>
    <property type="project" value="UniProtKB-UniRule"/>
</dbReference>
<dbReference type="GO" id="GO:0016208">
    <property type="term" value="F:AMP binding"/>
    <property type="evidence" value="ECO:0007669"/>
    <property type="project" value="TreeGrafter"/>
</dbReference>
<dbReference type="GO" id="GO:0005524">
    <property type="term" value="F:ATP binding"/>
    <property type="evidence" value="ECO:0007669"/>
    <property type="project" value="UniProtKB-KW"/>
</dbReference>
<dbReference type="GO" id="GO:0070095">
    <property type="term" value="F:fructose-6-phosphate binding"/>
    <property type="evidence" value="ECO:0007669"/>
    <property type="project" value="TreeGrafter"/>
</dbReference>
<dbReference type="GO" id="GO:0042802">
    <property type="term" value="F:identical protein binding"/>
    <property type="evidence" value="ECO:0007669"/>
    <property type="project" value="TreeGrafter"/>
</dbReference>
<dbReference type="GO" id="GO:0046872">
    <property type="term" value="F:metal ion binding"/>
    <property type="evidence" value="ECO:0007669"/>
    <property type="project" value="UniProtKB-KW"/>
</dbReference>
<dbReference type="GO" id="GO:0048029">
    <property type="term" value="F:monosaccharide binding"/>
    <property type="evidence" value="ECO:0007669"/>
    <property type="project" value="TreeGrafter"/>
</dbReference>
<dbReference type="GO" id="GO:0061621">
    <property type="term" value="P:canonical glycolysis"/>
    <property type="evidence" value="ECO:0007669"/>
    <property type="project" value="TreeGrafter"/>
</dbReference>
<dbReference type="GO" id="GO:0030388">
    <property type="term" value="P:fructose 1,6-bisphosphate metabolic process"/>
    <property type="evidence" value="ECO:0007669"/>
    <property type="project" value="TreeGrafter"/>
</dbReference>
<dbReference type="GO" id="GO:0006002">
    <property type="term" value="P:fructose 6-phosphate metabolic process"/>
    <property type="evidence" value="ECO:0007669"/>
    <property type="project" value="InterPro"/>
</dbReference>
<dbReference type="FunFam" id="3.40.50.460:FF:000002">
    <property type="entry name" value="ATP-dependent 6-phosphofructokinase"/>
    <property type="match status" value="1"/>
</dbReference>
<dbReference type="Gene3D" id="3.40.50.450">
    <property type="match status" value="1"/>
</dbReference>
<dbReference type="Gene3D" id="3.40.50.460">
    <property type="entry name" value="Phosphofructokinase domain"/>
    <property type="match status" value="1"/>
</dbReference>
<dbReference type="HAMAP" id="MF_00339">
    <property type="entry name" value="Phosphofructokinase_I_B1"/>
    <property type="match status" value="1"/>
</dbReference>
<dbReference type="InterPro" id="IPR022953">
    <property type="entry name" value="ATP_PFK"/>
</dbReference>
<dbReference type="InterPro" id="IPR012003">
    <property type="entry name" value="ATP_PFK_prok-type"/>
</dbReference>
<dbReference type="InterPro" id="IPR012828">
    <property type="entry name" value="PFKA_ATP_prok"/>
</dbReference>
<dbReference type="InterPro" id="IPR000023">
    <property type="entry name" value="Phosphofructokinase_dom"/>
</dbReference>
<dbReference type="InterPro" id="IPR035966">
    <property type="entry name" value="PKF_sf"/>
</dbReference>
<dbReference type="NCBIfam" id="NF002872">
    <property type="entry name" value="PRK03202.1"/>
    <property type="match status" value="1"/>
</dbReference>
<dbReference type="PANTHER" id="PTHR13697:SF4">
    <property type="entry name" value="ATP-DEPENDENT 6-PHOSPHOFRUCTOKINASE"/>
    <property type="match status" value="1"/>
</dbReference>
<dbReference type="PANTHER" id="PTHR13697">
    <property type="entry name" value="PHOSPHOFRUCTOKINASE"/>
    <property type="match status" value="1"/>
</dbReference>
<dbReference type="Pfam" id="PF00365">
    <property type="entry name" value="PFK"/>
    <property type="match status" value="1"/>
</dbReference>
<dbReference type="PIRSF" id="PIRSF000532">
    <property type="entry name" value="ATP_PFK_prok"/>
    <property type="match status" value="1"/>
</dbReference>
<dbReference type="PRINTS" id="PR00476">
    <property type="entry name" value="PHFRCTKINASE"/>
</dbReference>
<dbReference type="SUPFAM" id="SSF53784">
    <property type="entry name" value="Phosphofructokinase"/>
    <property type="match status" value="1"/>
</dbReference>
<accession>C0QQX4</accession>
<reference key="1">
    <citation type="journal article" date="2009" name="J. Bacteriol.">
        <title>Complete and draft genome sequences of six members of the Aquificales.</title>
        <authorList>
            <person name="Reysenbach A.-L."/>
            <person name="Hamamura N."/>
            <person name="Podar M."/>
            <person name="Griffiths E."/>
            <person name="Ferreira S."/>
            <person name="Hochstein R."/>
            <person name="Heidelberg J."/>
            <person name="Johnson J."/>
            <person name="Mead D."/>
            <person name="Pohorille A."/>
            <person name="Sarmiento M."/>
            <person name="Schweighofer K."/>
            <person name="Seshadri R."/>
            <person name="Voytek M.A."/>
        </authorList>
    </citation>
    <scope>NUCLEOTIDE SEQUENCE [LARGE SCALE GENOMIC DNA]</scope>
    <source>
        <strain>DSM 14350 / EX-H1</strain>
    </source>
</reference>